<feature type="chain" id="PRO_0000370136" description="3-deoxy-manno-octulosonate cytidylyltransferase">
    <location>
        <begin position="1"/>
        <end position="247"/>
    </location>
</feature>
<gene>
    <name evidence="1" type="primary">kdsB</name>
    <name type="ordered locus">RPE_3769</name>
</gene>
<sequence length="247" mass="26359">MSHPSTLVLIPARMAATRLPGKPLLDIAGLPMIVHVLRRAEAADVGPVAVATDTAEIAAAVEAHGGRVVMTRADHPSGSDRVAEALGVLDPDGRIEIVVNLQGDFPTIRPDNIGAVLGPLADPAVDIATLCAEIHTEEEATNPNVVKVIGSPLSPARLRALYFTRATAPWGEGPRYHHIGLYAYRRAALQRFIALPPSALEQREKLEQLRALEAGMRIDVGIVDTVPRGVDTAADLETARRILSSRN</sequence>
<comment type="function">
    <text evidence="1">Activates KDO (a required 8-carbon sugar) for incorporation into bacterial lipopolysaccharide in Gram-negative bacteria.</text>
</comment>
<comment type="catalytic activity">
    <reaction evidence="1">
        <text>3-deoxy-alpha-D-manno-oct-2-ulosonate + CTP = CMP-3-deoxy-beta-D-manno-octulosonate + diphosphate</text>
        <dbReference type="Rhea" id="RHEA:23448"/>
        <dbReference type="ChEBI" id="CHEBI:33019"/>
        <dbReference type="ChEBI" id="CHEBI:37563"/>
        <dbReference type="ChEBI" id="CHEBI:85986"/>
        <dbReference type="ChEBI" id="CHEBI:85987"/>
        <dbReference type="EC" id="2.7.7.38"/>
    </reaction>
</comment>
<comment type="pathway">
    <text evidence="1">Nucleotide-sugar biosynthesis; CMP-3-deoxy-D-manno-octulosonate biosynthesis; CMP-3-deoxy-D-manno-octulosonate from 3-deoxy-D-manno-octulosonate and CTP: step 1/1.</text>
</comment>
<comment type="pathway">
    <text evidence="1">Bacterial outer membrane biogenesis; lipopolysaccharide biosynthesis.</text>
</comment>
<comment type="subcellular location">
    <subcellularLocation>
        <location evidence="1">Cytoplasm</location>
    </subcellularLocation>
</comment>
<comment type="similarity">
    <text evidence="1">Belongs to the KdsB family.</text>
</comment>
<name>KDSB_RHOP5</name>
<evidence type="ECO:0000255" key="1">
    <source>
        <dbReference type="HAMAP-Rule" id="MF_00057"/>
    </source>
</evidence>
<accession>Q07K36</accession>
<keyword id="KW-0963">Cytoplasm</keyword>
<keyword id="KW-0448">Lipopolysaccharide biosynthesis</keyword>
<keyword id="KW-0548">Nucleotidyltransferase</keyword>
<keyword id="KW-0808">Transferase</keyword>
<protein>
    <recommendedName>
        <fullName evidence="1">3-deoxy-manno-octulosonate cytidylyltransferase</fullName>
        <ecNumber evidence="1">2.7.7.38</ecNumber>
    </recommendedName>
    <alternativeName>
        <fullName evidence="1">CMP-2-keto-3-deoxyoctulosonic acid synthase</fullName>
        <shortName evidence="1">CKS</shortName>
        <shortName evidence="1">CMP-KDO synthase</shortName>
    </alternativeName>
</protein>
<reference key="1">
    <citation type="submission" date="2006-09" db="EMBL/GenBank/DDBJ databases">
        <title>Complete sequence of Rhodopseudomonas palustris BisA53.</title>
        <authorList>
            <consortium name="US DOE Joint Genome Institute"/>
            <person name="Copeland A."/>
            <person name="Lucas S."/>
            <person name="Lapidus A."/>
            <person name="Barry K."/>
            <person name="Detter J.C."/>
            <person name="Glavina del Rio T."/>
            <person name="Hammon N."/>
            <person name="Israni S."/>
            <person name="Dalin E."/>
            <person name="Tice H."/>
            <person name="Pitluck S."/>
            <person name="Chain P."/>
            <person name="Malfatti S."/>
            <person name="Shin M."/>
            <person name="Vergez L."/>
            <person name="Schmutz J."/>
            <person name="Larimer F."/>
            <person name="Land M."/>
            <person name="Hauser L."/>
            <person name="Pelletier D.A."/>
            <person name="Kyrpides N."/>
            <person name="Kim E."/>
            <person name="Harwood C.S."/>
            <person name="Oda Y."/>
            <person name="Richardson P."/>
        </authorList>
    </citation>
    <scope>NUCLEOTIDE SEQUENCE [LARGE SCALE GENOMIC DNA]</scope>
    <source>
        <strain>BisA53</strain>
    </source>
</reference>
<organism>
    <name type="scientific">Rhodopseudomonas palustris (strain BisA53)</name>
    <dbReference type="NCBI Taxonomy" id="316055"/>
    <lineage>
        <taxon>Bacteria</taxon>
        <taxon>Pseudomonadati</taxon>
        <taxon>Pseudomonadota</taxon>
        <taxon>Alphaproteobacteria</taxon>
        <taxon>Hyphomicrobiales</taxon>
        <taxon>Nitrobacteraceae</taxon>
        <taxon>Rhodopseudomonas</taxon>
    </lineage>
</organism>
<dbReference type="EC" id="2.7.7.38" evidence="1"/>
<dbReference type="EMBL" id="CP000463">
    <property type="protein sequence ID" value="ABJ07698.1"/>
    <property type="molecule type" value="Genomic_DNA"/>
</dbReference>
<dbReference type="SMR" id="Q07K36"/>
<dbReference type="STRING" id="316055.RPE_3769"/>
<dbReference type="KEGG" id="rpe:RPE_3769"/>
<dbReference type="eggNOG" id="COG1212">
    <property type="taxonomic scope" value="Bacteria"/>
</dbReference>
<dbReference type="HOGENOM" id="CLU_065038_0_1_5"/>
<dbReference type="OrthoDB" id="9815559at2"/>
<dbReference type="UniPathway" id="UPA00030"/>
<dbReference type="UniPathway" id="UPA00358">
    <property type="reaction ID" value="UER00476"/>
</dbReference>
<dbReference type="GO" id="GO:0005829">
    <property type="term" value="C:cytosol"/>
    <property type="evidence" value="ECO:0007669"/>
    <property type="project" value="TreeGrafter"/>
</dbReference>
<dbReference type="GO" id="GO:0008690">
    <property type="term" value="F:3-deoxy-manno-octulosonate cytidylyltransferase activity"/>
    <property type="evidence" value="ECO:0007669"/>
    <property type="project" value="UniProtKB-UniRule"/>
</dbReference>
<dbReference type="GO" id="GO:0033468">
    <property type="term" value="P:CMP-keto-3-deoxy-D-manno-octulosonic acid biosynthetic process"/>
    <property type="evidence" value="ECO:0007669"/>
    <property type="project" value="UniProtKB-UniRule"/>
</dbReference>
<dbReference type="GO" id="GO:0009103">
    <property type="term" value="P:lipopolysaccharide biosynthetic process"/>
    <property type="evidence" value="ECO:0007669"/>
    <property type="project" value="UniProtKB-UniRule"/>
</dbReference>
<dbReference type="CDD" id="cd02517">
    <property type="entry name" value="CMP-KDO-Synthetase"/>
    <property type="match status" value="1"/>
</dbReference>
<dbReference type="Gene3D" id="3.90.550.10">
    <property type="entry name" value="Spore Coat Polysaccharide Biosynthesis Protein SpsA, Chain A"/>
    <property type="match status" value="1"/>
</dbReference>
<dbReference type="HAMAP" id="MF_00057">
    <property type="entry name" value="KdsB"/>
    <property type="match status" value="1"/>
</dbReference>
<dbReference type="InterPro" id="IPR003329">
    <property type="entry name" value="Cytidylyl_trans"/>
</dbReference>
<dbReference type="InterPro" id="IPR004528">
    <property type="entry name" value="KdsB"/>
</dbReference>
<dbReference type="InterPro" id="IPR029044">
    <property type="entry name" value="Nucleotide-diphossugar_trans"/>
</dbReference>
<dbReference type="NCBIfam" id="TIGR00466">
    <property type="entry name" value="kdsB"/>
    <property type="match status" value="1"/>
</dbReference>
<dbReference type="NCBIfam" id="NF003948">
    <property type="entry name" value="PRK05450.1-1"/>
    <property type="match status" value="1"/>
</dbReference>
<dbReference type="NCBIfam" id="NF003952">
    <property type="entry name" value="PRK05450.1-5"/>
    <property type="match status" value="1"/>
</dbReference>
<dbReference type="PANTHER" id="PTHR42866">
    <property type="entry name" value="3-DEOXY-MANNO-OCTULOSONATE CYTIDYLYLTRANSFERASE"/>
    <property type="match status" value="1"/>
</dbReference>
<dbReference type="PANTHER" id="PTHR42866:SF2">
    <property type="entry name" value="3-DEOXY-MANNO-OCTULOSONATE CYTIDYLYLTRANSFERASE, MITOCHONDRIAL"/>
    <property type="match status" value="1"/>
</dbReference>
<dbReference type="Pfam" id="PF02348">
    <property type="entry name" value="CTP_transf_3"/>
    <property type="match status" value="1"/>
</dbReference>
<dbReference type="SUPFAM" id="SSF53448">
    <property type="entry name" value="Nucleotide-diphospho-sugar transferases"/>
    <property type="match status" value="1"/>
</dbReference>
<proteinExistence type="inferred from homology"/>